<accession>Q8F201</accession>
<name>Y2977_LEPIN</name>
<gene>
    <name type="ordered locus">LA_2977</name>
</gene>
<keyword id="KW-0004">4Fe-4S</keyword>
<keyword id="KW-0408">Iron</keyword>
<keyword id="KW-0411">Iron-sulfur</keyword>
<keyword id="KW-0479">Metal-binding</keyword>
<keyword id="KW-0489">Methyltransferase</keyword>
<keyword id="KW-1185">Reference proteome</keyword>
<keyword id="KW-0949">S-adenosyl-L-methionine</keyword>
<keyword id="KW-0808">Transferase</keyword>
<organism>
    <name type="scientific">Leptospira interrogans serogroup Icterohaemorrhagiae serovar Lai (strain 56601)</name>
    <dbReference type="NCBI Taxonomy" id="189518"/>
    <lineage>
        <taxon>Bacteria</taxon>
        <taxon>Pseudomonadati</taxon>
        <taxon>Spirochaetota</taxon>
        <taxon>Spirochaetia</taxon>
        <taxon>Leptospirales</taxon>
        <taxon>Leptospiraceae</taxon>
        <taxon>Leptospira</taxon>
    </lineage>
</organism>
<sequence length="454" mass="52406">MLDKNTNLTHQSKIEFVNSNLRGIGFVNNTKIEVPYSLPGDVYNVTFFKKKRRKPSAKLELVSQTQRSFIPPCSAFTKCGGCCAQHISYQDQFRYKTSSLLESYKKDFEIVPTLYPAQKTFYYRNRMDFAVFPGPIVGQREAGSFRHIVDLETCLIQSKESNEELYRFRNLISKFPNLPYDRKSDSGFLKYFTLRKAKNTSELMTILTFVEEFKNTIEEKEFENVCLKSLKADHILFCFNRRKGEISATGEIKILKGMDSYKELVCGKEFRVPFDSFFQPNPEGFQPILDFIEKEIPDSFDHLVDLFCGSGFFSRIFAHKFLKITGIDSIESSLEIARKQMSLDFPKIDSSYLKVDLFSKNSSSKLKVLFSSSDKDVLIADPPRAGLGEFVLDALKDSKVSYFFYVSCNPTSQKSDLWKLKDFFQIQKILITDPYPQTPHLESVAFLKRKNFTT</sequence>
<reference key="1">
    <citation type="journal article" date="2003" name="Nature">
        <title>Unique physiological and pathogenic features of Leptospira interrogans revealed by whole-genome sequencing.</title>
        <authorList>
            <person name="Ren S.-X."/>
            <person name="Fu G."/>
            <person name="Jiang X.-G."/>
            <person name="Zeng R."/>
            <person name="Miao Y.-G."/>
            <person name="Xu H."/>
            <person name="Zhang Y.-X."/>
            <person name="Xiong H."/>
            <person name="Lu G."/>
            <person name="Lu L.-F."/>
            <person name="Jiang H.-Q."/>
            <person name="Jia J."/>
            <person name="Tu Y.-F."/>
            <person name="Jiang J.-X."/>
            <person name="Gu W.-Y."/>
            <person name="Zhang Y.-Q."/>
            <person name="Cai Z."/>
            <person name="Sheng H.-H."/>
            <person name="Yin H.-F."/>
            <person name="Zhang Y."/>
            <person name="Zhu G.-F."/>
            <person name="Wan M."/>
            <person name="Huang H.-L."/>
            <person name="Qian Z."/>
            <person name="Wang S.-Y."/>
            <person name="Ma W."/>
            <person name="Yao Z.-J."/>
            <person name="Shen Y."/>
            <person name="Qiang B.-Q."/>
            <person name="Xia Q.-C."/>
            <person name="Guo X.-K."/>
            <person name="Danchin A."/>
            <person name="Saint Girons I."/>
            <person name="Somerville R.L."/>
            <person name="Wen Y.-M."/>
            <person name="Shi M.-H."/>
            <person name="Chen Z."/>
            <person name="Xu J.-G."/>
            <person name="Zhao G.-P."/>
        </authorList>
    </citation>
    <scope>NUCLEOTIDE SEQUENCE [LARGE SCALE GENOMIC DNA]</scope>
    <source>
        <strain>56601</strain>
    </source>
</reference>
<proteinExistence type="inferred from homology"/>
<protein>
    <recommendedName>
        <fullName>Uncharacterized RNA methyltransferase LA_2977</fullName>
        <ecNumber>2.1.1.-</ecNumber>
    </recommendedName>
</protein>
<dbReference type="EC" id="2.1.1.-"/>
<dbReference type="EMBL" id="AE010300">
    <property type="protein sequence ID" value="AAN50175.1"/>
    <property type="molecule type" value="Genomic_DNA"/>
</dbReference>
<dbReference type="RefSeq" id="NP_713157.1">
    <property type="nucleotide sequence ID" value="NC_004342.2"/>
</dbReference>
<dbReference type="RefSeq" id="WP_000884774.1">
    <property type="nucleotide sequence ID" value="NC_004342.2"/>
</dbReference>
<dbReference type="SMR" id="Q8F201"/>
<dbReference type="STRING" id="189518.LA_2977"/>
<dbReference type="PaxDb" id="189518-LA_2977"/>
<dbReference type="EnsemblBacteria" id="AAN50175">
    <property type="protein sequence ID" value="AAN50175"/>
    <property type="gene ID" value="LA_2977"/>
</dbReference>
<dbReference type="KEGG" id="lil:LA_2977"/>
<dbReference type="PATRIC" id="fig|189518.3.peg.2955"/>
<dbReference type="HOGENOM" id="CLU_014689_8_1_12"/>
<dbReference type="InParanoid" id="Q8F201"/>
<dbReference type="OrthoDB" id="9804590at2"/>
<dbReference type="Proteomes" id="UP000001408">
    <property type="component" value="Chromosome I"/>
</dbReference>
<dbReference type="GO" id="GO:0016020">
    <property type="term" value="C:membrane"/>
    <property type="evidence" value="ECO:0007669"/>
    <property type="project" value="InterPro"/>
</dbReference>
<dbReference type="GO" id="GO:0051539">
    <property type="term" value="F:4 iron, 4 sulfur cluster binding"/>
    <property type="evidence" value="ECO:0007669"/>
    <property type="project" value="UniProtKB-KW"/>
</dbReference>
<dbReference type="GO" id="GO:0008083">
    <property type="term" value="F:growth factor activity"/>
    <property type="evidence" value="ECO:0007669"/>
    <property type="project" value="InterPro"/>
</dbReference>
<dbReference type="GO" id="GO:0046872">
    <property type="term" value="F:metal ion binding"/>
    <property type="evidence" value="ECO:0007669"/>
    <property type="project" value="UniProtKB-KW"/>
</dbReference>
<dbReference type="GO" id="GO:0070041">
    <property type="term" value="F:rRNA (uridine-C5-)-methyltransferase activity"/>
    <property type="evidence" value="ECO:0000318"/>
    <property type="project" value="GO_Central"/>
</dbReference>
<dbReference type="GO" id="GO:0070475">
    <property type="term" value="P:rRNA base methylation"/>
    <property type="evidence" value="ECO:0000318"/>
    <property type="project" value="GO_Central"/>
</dbReference>
<dbReference type="CDD" id="cd02440">
    <property type="entry name" value="AdoMet_MTases"/>
    <property type="match status" value="1"/>
</dbReference>
<dbReference type="Gene3D" id="2.40.50.1070">
    <property type="match status" value="1"/>
</dbReference>
<dbReference type="Gene3D" id="2.40.50.140">
    <property type="entry name" value="Nucleic acid-binding proteins"/>
    <property type="match status" value="1"/>
</dbReference>
<dbReference type="Gene3D" id="3.40.50.150">
    <property type="entry name" value="Vaccinia Virus protein VP39"/>
    <property type="match status" value="1"/>
</dbReference>
<dbReference type="InterPro" id="IPR030390">
    <property type="entry name" value="MeTrfase_TrmA_AS"/>
</dbReference>
<dbReference type="InterPro" id="IPR012340">
    <property type="entry name" value="NA-bd_OB-fold"/>
</dbReference>
<dbReference type="InterPro" id="IPR000072">
    <property type="entry name" value="PDGF/VEGF_dom"/>
</dbReference>
<dbReference type="InterPro" id="IPR029063">
    <property type="entry name" value="SAM-dependent_MTases_sf"/>
</dbReference>
<dbReference type="InterPro" id="IPR010280">
    <property type="entry name" value="U5_MeTrfase_fam"/>
</dbReference>
<dbReference type="PANTHER" id="PTHR11061">
    <property type="entry name" value="RNA M5U METHYLTRANSFERASE"/>
    <property type="match status" value="1"/>
</dbReference>
<dbReference type="PANTHER" id="PTHR11061:SF30">
    <property type="entry name" value="TRNA (URACIL(54)-C(5))-METHYLTRANSFERASE"/>
    <property type="match status" value="1"/>
</dbReference>
<dbReference type="Pfam" id="PF05958">
    <property type="entry name" value="tRNA_U5-meth_tr"/>
    <property type="match status" value="1"/>
</dbReference>
<dbReference type="SUPFAM" id="SSF53335">
    <property type="entry name" value="S-adenosyl-L-methionine-dependent methyltransferases"/>
    <property type="match status" value="1"/>
</dbReference>
<dbReference type="PROSITE" id="PS51687">
    <property type="entry name" value="SAM_MT_RNA_M5U"/>
    <property type="match status" value="1"/>
</dbReference>
<dbReference type="PROSITE" id="PS01230">
    <property type="entry name" value="TRMA_1"/>
    <property type="match status" value="1"/>
</dbReference>
<comment type="similarity">
    <text evidence="2">Belongs to the class I-like SAM-binding methyltransferase superfamily. RNA M5U methyltransferase family.</text>
</comment>
<feature type="chain" id="PRO_0000161996" description="Uncharacterized RNA methyltransferase LA_2977">
    <location>
        <begin position="1"/>
        <end position="454"/>
    </location>
</feature>
<feature type="active site" description="Nucleophile" evidence="2">
    <location>
        <position position="408"/>
    </location>
</feature>
<feature type="binding site" evidence="1">
    <location>
        <position position="73"/>
    </location>
    <ligand>
        <name>[4Fe-4S] cluster</name>
        <dbReference type="ChEBI" id="CHEBI:49883"/>
    </ligand>
</feature>
<feature type="binding site" evidence="1">
    <location>
        <position position="79"/>
    </location>
    <ligand>
        <name>[4Fe-4S] cluster</name>
        <dbReference type="ChEBI" id="CHEBI:49883"/>
    </ligand>
</feature>
<feature type="binding site" evidence="1">
    <location>
        <position position="82"/>
    </location>
    <ligand>
        <name>[4Fe-4S] cluster</name>
        <dbReference type="ChEBI" id="CHEBI:49883"/>
    </ligand>
</feature>
<feature type="binding site" evidence="1">
    <location>
        <position position="154"/>
    </location>
    <ligand>
        <name>[4Fe-4S] cluster</name>
        <dbReference type="ChEBI" id="CHEBI:49883"/>
    </ligand>
</feature>
<feature type="binding site" evidence="2">
    <location>
        <position position="279"/>
    </location>
    <ligand>
        <name>S-adenosyl-L-methionine</name>
        <dbReference type="ChEBI" id="CHEBI:59789"/>
    </ligand>
</feature>
<feature type="binding site" evidence="2">
    <location>
        <position position="307"/>
    </location>
    <ligand>
        <name>S-adenosyl-L-methionine</name>
        <dbReference type="ChEBI" id="CHEBI:59789"/>
    </ligand>
</feature>
<feature type="binding site" evidence="2">
    <location>
        <position position="328"/>
    </location>
    <ligand>
        <name>S-adenosyl-L-methionine</name>
        <dbReference type="ChEBI" id="CHEBI:59789"/>
    </ligand>
</feature>
<feature type="binding site" evidence="2">
    <location>
        <position position="381"/>
    </location>
    <ligand>
        <name>S-adenosyl-L-methionine</name>
        <dbReference type="ChEBI" id="CHEBI:59789"/>
    </ligand>
</feature>
<evidence type="ECO:0000250" key="1"/>
<evidence type="ECO:0000255" key="2">
    <source>
        <dbReference type="PROSITE-ProRule" id="PRU01024"/>
    </source>
</evidence>